<proteinExistence type="evidence at protein level"/>
<sequence>MAISSTADLAPSRKARGSESNDRALKLFIELLSVETQQQLFRGEPCIQRFVEIGPRTILSTMAKRSASIQKDQRSSASCYSPEFLSYHDNQPEILYQYQNDQAIYPLSQPTQPQFEPTSPSHLTKRSPSPSKALPMSAIPSAELTLQAGHVILAMTAQKLRRRFDQVPVEKTIRDLSGGKSTLQNELTGDLVAEFGRVPEGVEDQPLSSLAESFQPEFSGIPGKAMSTLISRFISGKMPAGFNQSAIQEYLNSRWGLTKSHATIPLCFAPTMEPARRLANADEARAYLDDLVEKHAAFQGISLVPSNQVADGHESLAPVVMNVADVDEMNKRTKLYRAQFDSLASYLGVDYFASEKAMSESESRIAELEETIRLLNTELDEQFIKGIKPSFNIKQVRKYDSWWNWSREELIRLLNEICQDSSSACPPDMENRLQNLLNKWDANCSEIVRAHLIGLQSRSSAPMNKLQLILEEIFTLGNQTLSIDPLFVHNLPPMGPQTIITDAGCLEYHELPRQISHYPEAMAYGPPWPQGHTSAPFIHIKTREDGQDWMYDSKATSIYHAMLDVGVTTGLTFTHKAVLVTGAGPSSIAASVIQGLLSGGARIIVTTSRSISQSADFYQQMYRQYGAKGSSLSLFPFNQASKQDCEQLVQHIYGPDSPTDGDLDYILPFAAIPQVGEPDAFGGRQELALRAMLVNILRLIGFVRQEKERLRIENRPTMIVLPMSCNEGTFGGDGLYSEAKIGLKALFNRFYSENWSKYLTICGAVIGWTRGTAIMQTSNAVAEEVEKLGVITFTQAEMAFNILALMTPALTALAEDTPIYADLTGGLGSMWNIKQEISAARKRISERQILQIAIAEEDAREQAMICSASTDVESGLPTTRHARLGLQFPPLPDVNEGYPNIEGMIDLTRIPVIVGYSELGPWGNARTRWEIEHRGDFSLEGYIEMAWIMGLIKHVDGHAKGRPYVGWVDADTETPIQDYEVPHKYHKHIMAHAGLRLIKPTKLDSYDPSRKELLHEVAVEEDLAPFETSKSTAEAFKLRHGDCVTLLPIADSDNCRVYIKKGAVLMIPKAVPFDQVVAGRIPEGWDPARYGIPEEIVQQVDVTTLYALCCVSEAFLSAGIKDPYEIYQYIHVSELANCLGSGGGPMKVIQNMYRDRFLDRQIRGDIILEHFVNTMGAWVNMLLLSATGPLKTPVGACATAIESLDIGCEAIQNGRCKVAVVGGCDDYGEELAFEFANIKATANSTEELSKGRTPADISRPTASSRSGFAESAGCGVQILMSAALAIEMGLPIYGVVAYTHMASDQIGRSIPAPGKGILTAARENGQAKESPLLDLNFRRAVFDAEVALINKSHPKQATTLKPDHSETSNAASLRIRDAQNRWANNIRLSDPSISPIRASLATWGLTVDDIKVVSMHGTSTKANEVNEGNVINTQMRHLGRQMGNPLLAVCQKSLTGHPKAGAGAWQLNGCLQMMQENIVPGNRNADNIDKQLREFEHIVYPMESLRVPEIKATLLTSFGFGQKGAINIMVSPRYLFASLSNSDYEDYRSRTTKRQRSATPTFVSRIMKNNLVQVKTRPPWNDPEAMQNFFLDPNSRVVDGQITRAPRTAYKHQDISVPQSAAVSVNEALHAMLATTDHSSPAASASVGVDVEEISSINVDNPIFISRNFTLLERDYCLSAPDPRASFAGRWVAKEAAFKSLQTTSTGAGTAMDQIEILEVGGIPKVVRLTSQLHGHAHEVAFAQGITNIQITISHCNNTAIAVALALRKND</sequence>
<dbReference type="EC" id="2.3.1.86" evidence="1"/>
<dbReference type="EC" id="1.1.1.100" evidence="1"/>
<dbReference type="EC" id="2.3.1.41" evidence="1"/>
<dbReference type="EMBL" id="AACD01000055">
    <property type="protein sequence ID" value="EAA63348.1"/>
    <property type="molecule type" value="Genomic_DNA"/>
</dbReference>
<dbReference type="EMBL" id="BN001306">
    <property type="protein sequence ID" value="CBF82822.1"/>
    <property type="molecule type" value="Genomic_DNA"/>
</dbReference>
<dbReference type="RefSeq" id="XP_660984.1">
    <property type="nucleotide sequence ID" value="XM_655892.1"/>
</dbReference>
<dbReference type="SMR" id="Q5B7V0"/>
<dbReference type="STRING" id="227321.Q5B7V0"/>
<dbReference type="EnsemblFungi" id="CBF82822">
    <property type="protein sequence ID" value="CBF82822"/>
    <property type="gene ID" value="ANIA_03380"/>
</dbReference>
<dbReference type="KEGG" id="ani:ANIA_03380"/>
<dbReference type="eggNOG" id="ENOG502T74T">
    <property type="taxonomic scope" value="Eukaryota"/>
</dbReference>
<dbReference type="HOGENOM" id="CLU_000114_0_0_1"/>
<dbReference type="InParanoid" id="Q5B7V0"/>
<dbReference type="OMA" id="YALCCVS"/>
<dbReference type="OrthoDB" id="4251012at2759"/>
<dbReference type="Proteomes" id="UP000000560">
    <property type="component" value="Chromosome VI"/>
</dbReference>
<dbReference type="GO" id="GO:0005835">
    <property type="term" value="C:fatty acid synthase complex"/>
    <property type="evidence" value="ECO:0007669"/>
    <property type="project" value="InterPro"/>
</dbReference>
<dbReference type="GO" id="GO:0004316">
    <property type="term" value="F:3-oxoacyl-[acyl-carrier-protein] reductase (NADPH) activity"/>
    <property type="evidence" value="ECO:0007669"/>
    <property type="project" value="UniProtKB-EC"/>
</dbReference>
<dbReference type="GO" id="GO:0004315">
    <property type="term" value="F:3-oxoacyl-[acyl-carrier-protein] synthase activity"/>
    <property type="evidence" value="ECO:0007669"/>
    <property type="project" value="UniProtKB-EC"/>
</dbReference>
<dbReference type="GO" id="GO:0004312">
    <property type="term" value="F:fatty acid synthase activity"/>
    <property type="evidence" value="ECO:0007669"/>
    <property type="project" value="InterPro"/>
</dbReference>
<dbReference type="GO" id="GO:0004321">
    <property type="term" value="F:fatty-acyl-CoA synthase activity"/>
    <property type="evidence" value="ECO:0007669"/>
    <property type="project" value="UniProtKB-EC"/>
</dbReference>
<dbReference type="GO" id="GO:0008897">
    <property type="term" value="F:holo-[acyl-carrier-protein] synthase activity"/>
    <property type="evidence" value="ECO:0007669"/>
    <property type="project" value="InterPro"/>
</dbReference>
<dbReference type="GO" id="GO:0000287">
    <property type="term" value="F:magnesium ion binding"/>
    <property type="evidence" value="ECO:0007669"/>
    <property type="project" value="InterPro"/>
</dbReference>
<dbReference type="GO" id="GO:0042759">
    <property type="term" value="P:long-chain fatty acid biosynthetic process"/>
    <property type="evidence" value="ECO:0007669"/>
    <property type="project" value="InterPro"/>
</dbReference>
<dbReference type="CDD" id="cd00828">
    <property type="entry name" value="elong_cond_enzymes"/>
    <property type="match status" value="1"/>
</dbReference>
<dbReference type="CDD" id="cd08950">
    <property type="entry name" value="KR_fFAS_SDR_c_like"/>
    <property type="match status" value="1"/>
</dbReference>
<dbReference type="FunFam" id="3.90.470.20:FF:000005">
    <property type="entry name" value="Fatty acid synthase alpha subunit FasA"/>
    <property type="match status" value="1"/>
</dbReference>
<dbReference type="FunFam" id="3.30.70.2490:FF:000001">
    <property type="entry name" value="Fatty acid synthase subunit alpha"/>
    <property type="match status" value="1"/>
</dbReference>
<dbReference type="FunFam" id="3.40.50.720:FF:001423">
    <property type="entry name" value="Fatty acid synthase subunit alpha"/>
    <property type="match status" value="1"/>
</dbReference>
<dbReference type="Gene3D" id="3.30.70.2490">
    <property type="match status" value="1"/>
</dbReference>
<dbReference type="Gene3D" id="3.40.47.10">
    <property type="match status" value="1"/>
</dbReference>
<dbReference type="Gene3D" id="3.90.25.70">
    <property type="match status" value="1"/>
</dbReference>
<dbReference type="Gene3D" id="3.90.470.20">
    <property type="entry name" value="4'-phosphopantetheinyl transferase domain"/>
    <property type="match status" value="1"/>
</dbReference>
<dbReference type="Gene3D" id="3.40.50.720">
    <property type="entry name" value="NAD(P)-binding Rossmann-like Domain"/>
    <property type="match status" value="2"/>
</dbReference>
<dbReference type="InterPro" id="IPR008278">
    <property type="entry name" value="4-PPantetheinyl_Trfase_dom"/>
</dbReference>
<dbReference type="InterPro" id="IPR037143">
    <property type="entry name" value="4-PPantetheinyl_Trfase_dom_sf"/>
</dbReference>
<dbReference type="InterPro" id="IPR040899">
    <property type="entry name" value="Fas_alpha_ACP"/>
</dbReference>
<dbReference type="InterPro" id="IPR047224">
    <property type="entry name" value="FAS_alpha_su_C"/>
</dbReference>
<dbReference type="InterPro" id="IPR026025">
    <property type="entry name" value="FAS_alpha_yeast"/>
</dbReference>
<dbReference type="InterPro" id="IPR041550">
    <property type="entry name" value="FASI_helical"/>
</dbReference>
<dbReference type="InterPro" id="IPR050830">
    <property type="entry name" value="Fungal_FAS"/>
</dbReference>
<dbReference type="InterPro" id="IPR018201">
    <property type="entry name" value="Ketoacyl_synth_AS"/>
</dbReference>
<dbReference type="InterPro" id="IPR014031">
    <property type="entry name" value="Ketoacyl_synth_C"/>
</dbReference>
<dbReference type="InterPro" id="IPR014030">
    <property type="entry name" value="Ketoacyl_synth_N"/>
</dbReference>
<dbReference type="InterPro" id="IPR036291">
    <property type="entry name" value="NAD(P)-bd_dom_sf"/>
</dbReference>
<dbReference type="InterPro" id="IPR020841">
    <property type="entry name" value="PKS_Beta-ketoAc_synthase_dom"/>
</dbReference>
<dbReference type="InterPro" id="IPR009081">
    <property type="entry name" value="PP-bd_ACP"/>
</dbReference>
<dbReference type="InterPro" id="IPR004568">
    <property type="entry name" value="Ppantetheine-prot_Trfase_dom"/>
</dbReference>
<dbReference type="InterPro" id="IPR016039">
    <property type="entry name" value="Thiolase-like"/>
</dbReference>
<dbReference type="NCBIfam" id="TIGR00556">
    <property type="entry name" value="pantethn_trn"/>
    <property type="match status" value="1"/>
</dbReference>
<dbReference type="PANTHER" id="PTHR10982:SF21">
    <property type="entry name" value="FATTY ACID SYNTHASE SUBUNIT BETA"/>
    <property type="match status" value="1"/>
</dbReference>
<dbReference type="PANTHER" id="PTHR10982">
    <property type="entry name" value="MALONYL COA-ACYL CARRIER PROTEIN TRANSACYLASE"/>
    <property type="match status" value="1"/>
</dbReference>
<dbReference type="Pfam" id="PF01648">
    <property type="entry name" value="ACPS"/>
    <property type="match status" value="1"/>
</dbReference>
<dbReference type="Pfam" id="PF18325">
    <property type="entry name" value="Fas_alpha_ACP"/>
    <property type="match status" value="1"/>
</dbReference>
<dbReference type="Pfam" id="PF18314">
    <property type="entry name" value="FAS_I_H"/>
    <property type="match status" value="1"/>
</dbReference>
<dbReference type="Pfam" id="PF00109">
    <property type="entry name" value="ketoacyl-synt"/>
    <property type="match status" value="1"/>
</dbReference>
<dbReference type="Pfam" id="PF02801">
    <property type="entry name" value="Ketoacyl-synt_C"/>
    <property type="match status" value="1"/>
</dbReference>
<dbReference type="PIRSF" id="PIRSF000454">
    <property type="entry name" value="FAS_yeast_alpha"/>
    <property type="match status" value="1"/>
</dbReference>
<dbReference type="SMART" id="SM00825">
    <property type="entry name" value="PKS_KS"/>
    <property type="match status" value="1"/>
</dbReference>
<dbReference type="SUPFAM" id="SSF56214">
    <property type="entry name" value="4'-phosphopantetheinyl transferase"/>
    <property type="match status" value="1"/>
</dbReference>
<dbReference type="SUPFAM" id="SSF51735">
    <property type="entry name" value="NAD(P)-binding Rossmann-fold domains"/>
    <property type="match status" value="1"/>
</dbReference>
<dbReference type="SUPFAM" id="SSF53901">
    <property type="entry name" value="Thiolase-like"/>
    <property type="match status" value="2"/>
</dbReference>
<dbReference type="PROSITE" id="PS50075">
    <property type="entry name" value="CARRIER"/>
    <property type="match status" value="1"/>
</dbReference>
<dbReference type="PROSITE" id="PS00606">
    <property type="entry name" value="KS3_1"/>
    <property type="match status" value="1"/>
</dbReference>
<dbReference type="PROSITE" id="PS52004">
    <property type="entry name" value="KS3_2"/>
    <property type="match status" value="1"/>
</dbReference>
<dbReference type="PROSITE" id="PS00012">
    <property type="entry name" value="PHOSPHOPANTETHEINE"/>
    <property type="match status" value="1"/>
</dbReference>
<evidence type="ECO:0000250" key="1">
    <source>
        <dbReference type="UniProtKB" id="P19097"/>
    </source>
</evidence>
<evidence type="ECO:0000255" key="2">
    <source>
        <dbReference type="PROSITE-ProRule" id="PRU00258"/>
    </source>
</evidence>
<evidence type="ECO:0000255" key="3">
    <source>
        <dbReference type="PROSITE-ProRule" id="PRU01348"/>
    </source>
</evidence>
<evidence type="ECO:0000256" key="4">
    <source>
        <dbReference type="SAM" id="MobiDB-lite"/>
    </source>
</evidence>
<evidence type="ECO:0000269" key="5">
    <source>
    </source>
</evidence>
<evidence type="ECO:0000269" key="6">
    <source>
    </source>
</evidence>
<evidence type="ECO:0000303" key="7">
    <source>
    </source>
</evidence>
<evidence type="ECO:0000303" key="8">
    <source>
    </source>
</evidence>
<evidence type="ECO:0000305" key="9"/>
<organism>
    <name type="scientific">Emericella nidulans (strain FGSC A4 / ATCC 38163 / CBS 112.46 / NRRL 194 / M139)</name>
    <name type="common">Aspergillus nidulans</name>
    <dbReference type="NCBI Taxonomy" id="227321"/>
    <lineage>
        <taxon>Eukaryota</taxon>
        <taxon>Fungi</taxon>
        <taxon>Dikarya</taxon>
        <taxon>Ascomycota</taxon>
        <taxon>Pezizomycotina</taxon>
        <taxon>Eurotiomycetes</taxon>
        <taxon>Eurotiomycetidae</taxon>
        <taxon>Eurotiales</taxon>
        <taxon>Aspergillaceae</taxon>
        <taxon>Aspergillus</taxon>
        <taxon>Aspergillus subgen. Nidulantes</taxon>
    </lineage>
</organism>
<protein>
    <recommendedName>
        <fullName evidence="8">Fatty acid synthase alpha subunit pkiB</fullName>
        <ecNumber evidence="1">2.3.1.86</ecNumber>
    </recommendedName>
    <domain>
        <recommendedName>
            <fullName evidence="1">3-oxoacyl-[acyl-carrier-protein] reductase</fullName>
            <ecNumber evidence="1">1.1.1.100</ecNumber>
        </recommendedName>
        <alternativeName>
            <fullName evidence="1">Beta-ketoacyl reductase</fullName>
        </alternativeName>
    </domain>
    <domain>
        <recommendedName>
            <fullName evidence="1">3-oxoacyl-[acyl-carrier-protein] synthase</fullName>
            <ecNumber evidence="1">2.3.1.41</ecNumber>
        </recommendedName>
        <alternativeName>
            <fullName evidence="8">Pki biosynthesis cluster protein B</fullName>
        </alternativeName>
    </domain>
</protein>
<feature type="chain" id="PRO_0000419253" description="Fatty acid synthase alpha subunit pkiB">
    <location>
        <begin position="1"/>
        <end position="1771"/>
    </location>
</feature>
<feature type="domain" description="Carrier" evidence="2">
    <location>
        <begin position="143"/>
        <end position="221"/>
    </location>
</feature>
<feature type="domain" description="Ketosynthase family 3 (KS3)" evidence="3">
    <location>
        <begin position="1011"/>
        <end position="1531"/>
    </location>
</feature>
<feature type="region of interest" description="Disordered" evidence="4">
    <location>
        <begin position="108"/>
        <end position="133"/>
    </location>
</feature>
<feature type="region of interest" description="Beta-ketoacyl reductase" evidence="1">
    <location>
        <begin position="575"/>
        <end position="771"/>
    </location>
</feature>
<feature type="compositionally biased region" description="Polar residues" evidence="4">
    <location>
        <begin position="108"/>
        <end position="130"/>
    </location>
</feature>
<feature type="active site" description="For beta-ketoacyl synthase activity" evidence="3">
    <location>
        <position position="1197"/>
    </location>
</feature>
<feature type="active site" description="For beta-ketoacyl synthase activity" evidence="3">
    <location>
        <position position="1416"/>
    </location>
</feature>
<feature type="active site" description="For beta-ketoacyl synthase activity" evidence="3">
    <location>
        <position position="1457"/>
    </location>
</feature>
<feature type="binding site" evidence="1">
    <location>
        <begin position="1650"/>
        <end position="1652"/>
    </location>
    <ligand>
        <name>acetyl-CoA</name>
        <dbReference type="ChEBI" id="CHEBI:57288"/>
    </ligand>
</feature>
<feature type="binding site" evidence="1">
    <location>
        <position position="1650"/>
    </location>
    <ligand>
        <name>Mg(2+)</name>
        <dbReference type="ChEBI" id="CHEBI:18420"/>
    </ligand>
</feature>
<feature type="binding site" evidence="1">
    <location>
        <position position="1651"/>
    </location>
    <ligand>
        <name>Mg(2+)</name>
        <dbReference type="ChEBI" id="CHEBI:18420"/>
    </ligand>
</feature>
<feature type="binding site" evidence="1">
    <location>
        <position position="1652"/>
    </location>
    <ligand>
        <name>Mg(2+)</name>
        <dbReference type="ChEBI" id="CHEBI:18420"/>
    </ligand>
</feature>
<feature type="binding site" evidence="1">
    <location>
        <position position="1676"/>
    </location>
    <ligand>
        <name>acetyl-CoA</name>
        <dbReference type="ChEBI" id="CHEBI:57288"/>
    </ligand>
</feature>
<feature type="binding site" evidence="1">
    <location>
        <position position="1686"/>
    </location>
    <ligand>
        <name>acetyl-CoA</name>
        <dbReference type="ChEBI" id="CHEBI:57288"/>
    </ligand>
</feature>
<feature type="binding site" evidence="1">
    <location>
        <begin position="1695"/>
        <end position="1705"/>
    </location>
    <ligand>
        <name>acetyl-CoA</name>
        <dbReference type="ChEBI" id="CHEBI:57288"/>
    </ligand>
</feature>
<feature type="binding site" evidence="1">
    <location>
        <begin position="1719"/>
        <end position="1722"/>
    </location>
    <ligand>
        <name>acetyl-CoA</name>
        <dbReference type="ChEBI" id="CHEBI:57288"/>
    </ligand>
</feature>
<feature type="binding site" evidence="1">
    <location>
        <begin position="1753"/>
        <end position="1755"/>
    </location>
    <ligand>
        <name>acetyl-CoA</name>
        <dbReference type="ChEBI" id="CHEBI:57288"/>
    </ligand>
</feature>
<feature type="binding site" evidence="1">
    <location>
        <position position="1754"/>
    </location>
    <ligand>
        <name>Mg(2+)</name>
        <dbReference type="ChEBI" id="CHEBI:18420"/>
    </ligand>
</feature>
<feature type="binding site" evidence="1">
    <location>
        <position position="1755"/>
    </location>
    <ligand>
        <name>Mg(2+)</name>
        <dbReference type="ChEBI" id="CHEBI:18420"/>
    </ligand>
</feature>
<feature type="modified residue" description="O-(pantetheine 4'-phosphoryl)serine" evidence="2">
    <location>
        <position position="181"/>
    </location>
</feature>
<reference key="1">
    <citation type="journal article" date="2005" name="Nature">
        <title>Sequencing of Aspergillus nidulans and comparative analysis with A. fumigatus and A. oryzae.</title>
        <authorList>
            <person name="Galagan J.E."/>
            <person name="Calvo S.E."/>
            <person name="Cuomo C."/>
            <person name="Ma L.-J."/>
            <person name="Wortman J.R."/>
            <person name="Batzoglou S."/>
            <person name="Lee S.-I."/>
            <person name="Bastuerkmen M."/>
            <person name="Spevak C.C."/>
            <person name="Clutterbuck J."/>
            <person name="Kapitonov V."/>
            <person name="Jurka J."/>
            <person name="Scazzocchio C."/>
            <person name="Farman M.L."/>
            <person name="Butler J."/>
            <person name="Purcell S."/>
            <person name="Harris S."/>
            <person name="Braus G.H."/>
            <person name="Draht O."/>
            <person name="Busch S."/>
            <person name="D'Enfert C."/>
            <person name="Bouchier C."/>
            <person name="Goldman G.H."/>
            <person name="Bell-Pedersen D."/>
            <person name="Griffiths-Jones S."/>
            <person name="Doonan J.H."/>
            <person name="Yu J."/>
            <person name="Vienken K."/>
            <person name="Pain A."/>
            <person name="Freitag M."/>
            <person name="Selker E.U."/>
            <person name="Archer D.B."/>
            <person name="Penalva M.A."/>
            <person name="Oakley B.R."/>
            <person name="Momany M."/>
            <person name="Tanaka T."/>
            <person name="Kumagai T."/>
            <person name="Asai K."/>
            <person name="Machida M."/>
            <person name="Nierman W.C."/>
            <person name="Denning D.W."/>
            <person name="Caddick M.X."/>
            <person name="Hynes M."/>
            <person name="Paoletti M."/>
            <person name="Fischer R."/>
            <person name="Miller B.L."/>
            <person name="Dyer P.S."/>
            <person name="Sachs M.S."/>
            <person name="Osmani S.A."/>
            <person name="Birren B.W."/>
        </authorList>
    </citation>
    <scope>NUCLEOTIDE SEQUENCE [LARGE SCALE GENOMIC DNA]</scope>
    <source>
        <strain>FGSC A4 / ATCC 38163 / CBS 112.46 / NRRL 194 / M139</strain>
    </source>
</reference>
<reference key="2">
    <citation type="journal article" date="2009" name="Fungal Genet. Biol.">
        <title>The 2008 update of the Aspergillus nidulans genome annotation: a community effort.</title>
        <authorList>
            <person name="Wortman J.R."/>
            <person name="Gilsenan J.M."/>
            <person name="Joardar V."/>
            <person name="Deegan J."/>
            <person name="Clutterbuck J."/>
            <person name="Andersen M.R."/>
            <person name="Archer D."/>
            <person name="Bencina M."/>
            <person name="Braus G."/>
            <person name="Coutinho P."/>
            <person name="von Dohren H."/>
            <person name="Doonan J."/>
            <person name="Driessen A.J."/>
            <person name="Durek P."/>
            <person name="Espeso E."/>
            <person name="Fekete E."/>
            <person name="Flipphi M."/>
            <person name="Estrada C.G."/>
            <person name="Geysens S."/>
            <person name="Goldman G."/>
            <person name="de Groot P.W."/>
            <person name="Hansen K."/>
            <person name="Harris S.D."/>
            <person name="Heinekamp T."/>
            <person name="Helmstaedt K."/>
            <person name="Henrissat B."/>
            <person name="Hofmann G."/>
            <person name="Homan T."/>
            <person name="Horio T."/>
            <person name="Horiuchi H."/>
            <person name="James S."/>
            <person name="Jones M."/>
            <person name="Karaffa L."/>
            <person name="Karanyi Z."/>
            <person name="Kato M."/>
            <person name="Keller N."/>
            <person name="Kelly D.E."/>
            <person name="Kiel J.A."/>
            <person name="Kim J.M."/>
            <person name="van der Klei I.J."/>
            <person name="Klis F.M."/>
            <person name="Kovalchuk A."/>
            <person name="Krasevec N."/>
            <person name="Kubicek C.P."/>
            <person name="Liu B."/>
            <person name="Maccabe A."/>
            <person name="Meyer V."/>
            <person name="Mirabito P."/>
            <person name="Miskei M."/>
            <person name="Mos M."/>
            <person name="Mullins J."/>
            <person name="Nelson D.R."/>
            <person name="Nielsen J."/>
            <person name="Oakley B.R."/>
            <person name="Osmani S.A."/>
            <person name="Pakula T."/>
            <person name="Paszewski A."/>
            <person name="Paulsen I."/>
            <person name="Pilsyk S."/>
            <person name="Pocsi I."/>
            <person name="Punt P.J."/>
            <person name="Ram A.F."/>
            <person name="Ren Q."/>
            <person name="Robellet X."/>
            <person name="Robson G."/>
            <person name="Seiboth B."/>
            <person name="van Solingen P."/>
            <person name="Specht T."/>
            <person name="Sun J."/>
            <person name="Taheri-Talesh N."/>
            <person name="Takeshita N."/>
            <person name="Ussery D."/>
            <person name="vanKuyk P.A."/>
            <person name="Visser H."/>
            <person name="van de Vondervoort P.J."/>
            <person name="de Vries R.P."/>
            <person name="Walton J."/>
            <person name="Xiang X."/>
            <person name="Xiong Y."/>
            <person name="Zeng A.P."/>
            <person name="Brandt B.W."/>
            <person name="Cornell M.J."/>
            <person name="van den Hondel C.A."/>
            <person name="Visser J."/>
            <person name="Oliver S.G."/>
            <person name="Turner G."/>
        </authorList>
    </citation>
    <scope>GENOME REANNOTATION</scope>
    <source>
        <strain>FGSC A4 / ATCC 38163 / CBS 112.46 / NRRL 194 / M139</strain>
    </source>
</reference>
<reference key="3">
    <citation type="journal article" date="2004" name="Fungal Genet. Biol.">
        <title>Two Delta9-stearic acid desaturases are required for Aspergillus nidulans growth and development.</title>
        <authorList>
            <person name="Wilson R.A."/>
            <person name="Chang P.K."/>
            <person name="Dobrzyn A."/>
            <person name="Ntambi J.M."/>
            <person name="Zarnowski R."/>
            <person name="Keller N.P."/>
        </authorList>
    </citation>
    <scope>INDUCTION BY FATTY ACIDS</scope>
    <source>
        <strain>FGSC A4 / ATCC 38163 / CBS 112.46 / NRRL 194 / M139</strain>
    </source>
</reference>
<reference key="4">
    <citation type="journal article" date="2012" name="J. Am. Chem. Soc.">
        <title>Illuminating the diversity of aromatic polyketide synthases in Aspergillus nidulans.</title>
        <authorList>
            <person name="Ahuja M."/>
            <person name="Chiang Y.M."/>
            <person name="Chang S.L."/>
            <person name="Praseuth M.B."/>
            <person name="Entwistle R."/>
            <person name="Sanchez J.F."/>
            <person name="Lo H.C."/>
            <person name="Yeh H.H."/>
            <person name="Oakley B.R."/>
            <person name="Wang C.C."/>
        </authorList>
    </citation>
    <scope>FUNCTION</scope>
    <scope>CATALYTIC ACTIVITY</scope>
    <scope>PATHWAY</scope>
</reference>
<accession>Q5B7V0</accession>
<accession>C8VHP2</accession>
<comment type="function">
    <text evidence="6">Fatty acid synthase alpha subunit; part of the pki gene cluster that mediates the biosynthesis of 2,4-dihydroxy-3-methyl-6-(2-oxoundecyl)benzaldehyde (PubMed:22510154). The first step in the pathway is the generation of the decanoyl starter unit by the FAS composed of subunits pkiB and pkiC, which is then transferred directly from the FAS to the SAT domain of the non-reducing polyketide synthase pkiA (PubMed:22510154). PkiA condenses the decanoyyl starter unit with 4 malonyl-CoA units and performs one methylation step to yield 2,4-dihydroxy-3-methyl-6-(2-oxoundecyl)benzaldehyde (PubMed:22510154).</text>
</comment>
<comment type="catalytic activity">
    <reaction evidence="1">
        <text>acetyl-CoA + n malonyl-CoA + 2n NADPH + 4n H(+) = a long-chain-acyl-CoA + n CoA + n CO2 + 2n NADP(+).</text>
        <dbReference type="EC" id="2.3.1.86"/>
    </reaction>
</comment>
<comment type="catalytic activity">
    <reaction evidence="1">
        <text>a fatty acyl-[ACP] + malonyl-[ACP] + H(+) = a 3-oxoacyl-[ACP] + holo-[ACP] + CO2</text>
        <dbReference type="Rhea" id="RHEA:22836"/>
        <dbReference type="Rhea" id="RHEA-COMP:9623"/>
        <dbReference type="Rhea" id="RHEA-COMP:9685"/>
        <dbReference type="Rhea" id="RHEA-COMP:9916"/>
        <dbReference type="Rhea" id="RHEA-COMP:14125"/>
        <dbReference type="ChEBI" id="CHEBI:15378"/>
        <dbReference type="ChEBI" id="CHEBI:16526"/>
        <dbReference type="ChEBI" id="CHEBI:64479"/>
        <dbReference type="ChEBI" id="CHEBI:78449"/>
        <dbReference type="ChEBI" id="CHEBI:78776"/>
        <dbReference type="ChEBI" id="CHEBI:138651"/>
        <dbReference type="EC" id="2.3.1.41"/>
    </reaction>
</comment>
<comment type="catalytic activity">
    <reaction evidence="1">
        <text>a (3R)-hydroxyacyl-[ACP] + NADP(+) = a 3-oxoacyl-[ACP] + NADPH + H(+)</text>
        <dbReference type="Rhea" id="RHEA:17397"/>
        <dbReference type="Rhea" id="RHEA-COMP:9916"/>
        <dbReference type="Rhea" id="RHEA-COMP:9945"/>
        <dbReference type="ChEBI" id="CHEBI:15378"/>
        <dbReference type="ChEBI" id="CHEBI:57783"/>
        <dbReference type="ChEBI" id="CHEBI:58349"/>
        <dbReference type="ChEBI" id="CHEBI:78776"/>
        <dbReference type="ChEBI" id="CHEBI:78827"/>
        <dbReference type="EC" id="1.1.1.100"/>
    </reaction>
</comment>
<comment type="pathway">
    <text evidence="6">Secondary metabolite biosynthesis.</text>
</comment>
<comment type="subunit">
    <text evidence="1">[Alpha(6)beta(6)] hexamers of two multifunctional subunits (alpha and beta).</text>
</comment>
<comment type="induction">
    <text evidence="5">Induced by oleic acid and stearic acid, but not by linoleic acid.</text>
</comment>
<comment type="similarity">
    <text evidence="9">Belongs to the thiolase-like superfamily. Fungal fatty acid synthetase subunit alpha family.</text>
</comment>
<keyword id="KW-0275">Fatty acid biosynthesis</keyword>
<keyword id="KW-0276">Fatty acid metabolism</keyword>
<keyword id="KW-0444">Lipid biosynthesis</keyword>
<keyword id="KW-0443">Lipid metabolism</keyword>
<keyword id="KW-0460">Magnesium</keyword>
<keyword id="KW-0479">Metal-binding</keyword>
<keyword id="KW-0511">Multifunctional enzyme</keyword>
<keyword id="KW-0520">NAD</keyword>
<keyword id="KW-0521">NADP</keyword>
<keyword id="KW-0560">Oxidoreductase</keyword>
<keyword id="KW-0596">Phosphopantetheine</keyword>
<keyword id="KW-0597">Phosphoprotein</keyword>
<keyword id="KW-1185">Reference proteome</keyword>
<keyword id="KW-0808">Transferase</keyword>
<name>PKIB_EMENI</name>
<gene>
    <name evidence="8" type="primary">pkiB</name>
    <name evidence="7" type="synonym">fasA</name>
    <name type="ORF">AN3380</name>
</gene>